<dbReference type="EC" id="1.3.7.7" evidence="1"/>
<dbReference type="EMBL" id="D17510">
    <property type="protein sequence ID" value="BAA04440.1"/>
    <property type="molecule type" value="Genomic_DNA"/>
</dbReference>
<dbReference type="PIR" id="T07564">
    <property type="entry name" value="T07564"/>
</dbReference>
<dbReference type="RefSeq" id="NP_042485.2">
    <property type="nucleotide sequence ID" value="NC_001631.1"/>
</dbReference>
<dbReference type="SMR" id="P41645"/>
<dbReference type="GeneID" id="808990"/>
<dbReference type="UniPathway" id="UPA00670"/>
<dbReference type="GO" id="GO:0009507">
    <property type="term" value="C:chloroplast"/>
    <property type="evidence" value="ECO:0007669"/>
    <property type="project" value="UniProtKB-SubCell"/>
</dbReference>
<dbReference type="GO" id="GO:0051539">
    <property type="term" value="F:4 iron, 4 sulfur cluster binding"/>
    <property type="evidence" value="ECO:0007669"/>
    <property type="project" value="UniProtKB-UniRule"/>
</dbReference>
<dbReference type="GO" id="GO:0005524">
    <property type="term" value="F:ATP binding"/>
    <property type="evidence" value="ECO:0007669"/>
    <property type="project" value="UniProtKB-UniRule"/>
</dbReference>
<dbReference type="GO" id="GO:0046872">
    <property type="term" value="F:metal ion binding"/>
    <property type="evidence" value="ECO:0007669"/>
    <property type="project" value="UniProtKB-KW"/>
</dbReference>
<dbReference type="GO" id="GO:0016730">
    <property type="term" value="F:oxidoreductase activity, acting on iron-sulfur proteins as donors"/>
    <property type="evidence" value="ECO:0007669"/>
    <property type="project" value="InterPro"/>
</dbReference>
<dbReference type="GO" id="GO:0016636">
    <property type="term" value="F:oxidoreductase activity, acting on the CH-CH group of donors, iron-sulfur protein as acceptor"/>
    <property type="evidence" value="ECO:0007669"/>
    <property type="project" value="UniProtKB-UniRule"/>
</dbReference>
<dbReference type="GO" id="GO:0036068">
    <property type="term" value="P:light-independent chlorophyll biosynthetic process"/>
    <property type="evidence" value="ECO:0007669"/>
    <property type="project" value="UniProtKB-UniRule"/>
</dbReference>
<dbReference type="GO" id="GO:0019685">
    <property type="term" value="P:photosynthesis, dark reaction"/>
    <property type="evidence" value="ECO:0007669"/>
    <property type="project" value="InterPro"/>
</dbReference>
<dbReference type="CDD" id="cd02032">
    <property type="entry name" value="Bchl-like"/>
    <property type="match status" value="1"/>
</dbReference>
<dbReference type="Gene3D" id="3.40.50.300">
    <property type="entry name" value="P-loop containing nucleotide triphosphate hydrolases"/>
    <property type="match status" value="1"/>
</dbReference>
<dbReference type="HAMAP" id="MF_00355">
    <property type="entry name" value="ChlL_BchL"/>
    <property type="match status" value="1"/>
</dbReference>
<dbReference type="InterPro" id="IPR030655">
    <property type="entry name" value="NifH/chlL_CS"/>
</dbReference>
<dbReference type="InterPro" id="IPR000392">
    <property type="entry name" value="NifH/frxC"/>
</dbReference>
<dbReference type="InterPro" id="IPR027417">
    <property type="entry name" value="P-loop_NTPase"/>
</dbReference>
<dbReference type="InterPro" id="IPR005971">
    <property type="entry name" value="Protochlorophyllide_ATP-bd"/>
</dbReference>
<dbReference type="NCBIfam" id="TIGR01281">
    <property type="entry name" value="DPOR_bchL"/>
    <property type="match status" value="1"/>
</dbReference>
<dbReference type="PANTHER" id="PTHR42864">
    <property type="entry name" value="LIGHT-INDEPENDENT PROTOCHLOROPHYLLIDE REDUCTASE IRON-SULFUR ATP-BINDING PROTEIN"/>
    <property type="match status" value="1"/>
</dbReference>
<dbReference type="PANTHER" id="PTHR42864:SF2">
    <property type="entry name" value="LIGHT-INDEPENDENT PROTOCHLOROPHYLLIDE REDUCTASE IRON-SULFUR ATP-BINDING PROTEIN"/>
    <property type="match status" value="1"/>
</dbReference>
<dbReference type="Pfam" id="PF00142">
    <property type="entry name" value="Fer4_NifH"/>
    <property type="match status" value="1"/>
</dbReference>
<dbReference type="PIRSF" id="PIRSF000363">
    <property type="entry name" value="Nitrogenase_iron"/>
    <property type="match status" value="1"/>
</dbReference>
<dbReference type="PRINTS" id="PR00091">
    <property type="entry name" value="NITROGNASEII"/>
</dbReference>
<dbReference type="SUPFAM" id="SSF52540">
    <property type="entry name" value="P-loop containing nucleoside triphosphate hydrolases"/>
    <property type="match status" value="1"/>
</dbReference>
<dbReference type="PROSITE" id="PS00746">
    <property type="entry name" value="NIFH_FRXC_1"/>
    <property type="match status" value="1"/>
</dbReference>
<dbReference type="PROSITE" id="PS00692">
    <property type="entry name" value="NIFH_FRXC_2"/>
    <property type="match status" value="1"/>
</dbReference>
<dbReference type="PROSITE" id="PS51026">
    <property type="entry name" value="NIFH_FRXC_3"/>
    <property type="match status" value="1"/>
</dbReference>
<accession>P41645</accession>
<reference key="1">
    <citation type="journal article" date="1994" name="Proc. Natl. Acad. Sci. U.S.A.">
        <title>Loss of all ndh genes as determined by sequencing the entire chloroplast genome of the black pine Pinus thunbergii.</title>
        <authorList>
            <person name="Wakasugi T."/>
            <person name="Tsudzuki J."/>
            <person name="Ito S."/>
            <person name="Nakashima K."/>
            <person name="Tsudzuki T."/>
            <person name="Sugiura M."/>
        </authorList>
    </citation>
    <scope>NUCLEOTIDE SEQUENCE [LARGE SCALE GENOMIC DNA]</scope>
</reference>
<organism>
    <name type="scientific">Pinus thunbergii</name>
    <name type="common">Japanese black pine</name>
    <name type="synonym">Pinus thunbergiana</name>
    <dbReference type="NCBI Taxonomy" id="3350"/>
    <lineage>
        <taxon>Eukaryota</taxon>
        <taxon>Viridiplantae</taxon>
        <taxon>Streptophyta</taxon>
        <taxon>Embryophyta</taxon>
        <taxon>Tracheophyta</taxon>
        <taxon>Spermatophyta</taxon>
        <taxon>Pinopsida</taxon>
        <taxon>Pinidae</taxon>
        <taxon>Conifers I</taxon>
        <taxon>Pinales</taxon>
        <taxon>Pinaceae</taxon>
        <taxon>Pinus</taxon>
        <taxon>Pinus subgen. Pinus</taxon>
    </lineage>
</organism>
<geneLocation type="chloroplast"/>
<proteinExistence type="inferred from homology"/>
<protein>
    <recommendedName>
        <fullName evidence="1">Light-independent protochlorophyllide reductase iron-sulfur ATP-binding protein</fullName>
        <shortName evidence="1">DPOR subunit L</shortName>
        <shortName evidence="1">LI-POR subunit L</shortName>
        <ecNumber evidence="1">1.3.7.7</ecNumber>
    </recommendedName>
</protein>
<name>CHLL_PINTH</name>
<gene>
    <name evidence="1" type="primary">chlL</name>
    <name type="synonym">frxC</name>
</gene>
<sequence>MKIAVYGKGGIGKSTTSCNISVALARRGQKVLQIGCDPKHDSTFTLTGFLIPTIIDTLQSKDYHYEDIWPEDVIHKGYGGVDCVEAGGPPAGAGCGGYVVGETVKLLKELNAFYEYDIILFDVLGDVVCGGFAAPLNYADYCVIITDNGFDALFAANRITASIREKARTHPLRLAGLVGNRTSRRDLINKYVEACPMPVIEVLPIIEDIRVSRVKGKTLFEMVGFEPSLNYVCNYYLGIADQILSQPEGIVPKEIPDRELFSLLSDLYLNPIGGGGQKKNNKENLLGFTRI</sequence>
<comment type="function">
    <text evidence="1">Component of the dark-operative protochlorophyllide reductase (DPOR) that uses Mg-ATP and reduced ferredoxin to reduce ring D of protochlorophyllide (Pchlide) to form chlorophyllide a (Chlide). This reaction is light-independent. The L component serves as a unique electron donor to the NB-component of the complex, and binds Mg-ATP.</text>
</comment>
<comment type="catalytic activity">
    <reaction evidence="1">
        <text>chlorophyllide a + oxidized 2[4Fe-4S]-[ferredoxin] + 2 ADP + 2 phosphate = protochlorophyllide a + reduced 2[4Fe-4S]-[ferredoxin] + 2 ATP + 2 H2O</text>
        <dbReference type="Rhea" id="RHEA:28202"/>
        <dbReference type="Rhea" id="RHEA-COMP:10002"/>
        <dbReference type="Rhea" id="RHEA-COMP:10004"/>
        <dbReference type="ChEBI" id="CHEBI:15377"/>
        <dbReference type="ChEBI" id="CHEBI:30616"/>
        <dbReference type="ChEBI" id="CHEBI:33722"/>
        <dbReference type="ChEBI" id="CHEBI:33723"/>
        <dbReference type="ChEBI" id="CHEBI:43474"/>
        <dbReference type="ChEBI" id="CHEBI:83348"/>
        <dbReference type="ChEBI" id="CHEBI:83350"/>
        <dbReference type="ChEBI" id="CHEBI:456216"/>
        <dbReference type="EC" id="1.3.7.7"/>
    </reaction>
</comment>
<comment type="cofactor">
    <cofactor evidence="1">
        <name>[4Fe-4S] cluster</name>
        <dbReference type="ChEBI" id="CHEBI:49883"/>
    </cofactor>
    <text evidence="1">Binds 1 [4Fe-4S] cluster per dimer.</text>
</comment>
<comment type="pathway">
    <text evidence="1">Porphyrin-containing compound metabolism; chlorophyll biosynthesis (light-independent).</text>
</comment>
<comment type="subunit">
    <text evidence="1">Homodimer. Protochlorophyllide reductase is composed of three subunits; ChlL, ChlN and ChlB.</text>
</comment>
<comment type="subcellular location">
    <subcellularLocation>
        <location>Plastid</location>
        <location>Chloroplast</location>
    </subcellularLocation>
</comment>
<comment type="similarity">
    <text evidence="1">Belongs to the NifH/BchL/ChlL family.</text>
</comment>
<evidence type="ECO:0000255" key="1">
    <source>
        <dbReference type="HAMAP-Rule" id="MF_00355"/>
    </source>
</evidence>
<feature type="chain" id="PRO_0000139566" description="Light-independent protochlorophyllide reductase iron-sulfur ATP-binding protein">
    <location>
        <begin position="1"/>
        <end position="291"/>
    </location>
</feature>
<feature type="binding site" evidence="1">
    <location>
        <begin position="10"/>
        <end position="15"/>
    </location>
    <ligand>
        <name>ATP</name>
        <dbReference type="ChEBI" id="CHEBI:30616"/>
    </ligand>
</feature>
<feature type="binding site" evidence="1">
    <location>
        <position position="14"/>
    </location>
    <ligand>
        <name>Mg(2+)</name>
        <dbReference type="ChEBI" id="CHEBI:18420"/>
    </ligand>
</feature>
<feature type="binding site" evidence="1">
    <location>
        <position position="39"/>
    </location>
    <ligand>
        <name>ATP</name>
        <dbReference type="ChEBI" id="CHEBI:30616"/>
    </ligand>
</feature>
<feature type="binding site" evidence="1">
    <location>
        <position position="95"/>
    </location>
    <ligand>
        <name>[4Fe-4S] cluster</name>
        <dbReference type="ChEBI" id="CHEBI:49883"/>
        <note>ligand shared between dimeric partners</note>
    </ligand>
</feature>
<feature type="binding site" evidence="1">
    <location>
        <position position="129"/>
    </location>
    <ligand>
        <name>[4Fe-4S] cluster</name>
        <dbReference type="ChEBI" id="CHEBI:49883"/>
        <note>ligand shared between dimeric partners</note>
    </ligand>
</feature>
<feature type="binding site" evidence="1">
    <location>
        <begin position="180"/>
        <end position="181"/>
    </location>
    <ligand>
        <name>ATP</name>
        <dbReference type="ChEBI" id="CHEBI:30616"/>
    </ligand>
</feature>
<keyword id="KW-0004">4Fe-4S</keyword>
<keyword id="KW-0067">ATP-binding</keyword>
<keyword id="KW-0149">Chlorophyll biosynthesis</keyword>
<keyword id="KW-0150">Chloroplast</keyword>
<keyword id="KW-0408">Iron</keyword>
<keyword id="KW-0411">Iron-sulfur</keyword>
<keyword id="KW-0460">Magnesium</keyword>
<keyword id="KW-0479">Metal-binding</keyword>
<keyword id="KW-0547">Nucleotide-binding</keyword>
<keyword id="KW-0560">Oxidoreductase</keyword>
<keyword id="KW-0602">Photosynthesis</keyword>
<keyword id="KW-0934">Plastid</keyword>